<accession>Q8IVU1</accession>
<accession>O95215</accession>
<comment type="subcellular location">
    <subcellularLocation>
        <location evidence="1">Membrane</location>
        <topology evidence="1">Single-pass membrane protein</topology>
    </subcellularLocation>
</comment>
<comment type="similarity">
    <text evidence="7">Belongs to the immunoglobulin superfamily. DCC family.</text>
</comment>
<protein>
    <recommendedName>
        <fullName>Immunoglobulin superfamily DCC subclass member 3</fullName>
    </recommendedName>
    <alternativeName>
        <fullName>Putative neuronal cell adhesion molecule</fullName>
    </alternativeName>
</protein>
<feature type="signal peptide" evidence="1">
    <location>
        <begin position="1"/>
        <end position="35"/>
    </location>
</feature>
<feature type="chain" id="PRO_0000014920" description="Immunoglobulin superfamily DCC subclass member 3">
    <location>
        <begin position="36"/>
        <end position="814"/>
    </location>
</feature>
<feature type="transmembrane region" description="Helical" evidence="1">
    <location>
        <begin position="641"/>
        <end position="661"/>
    </location>
</feature>
<feature type="domain" description="Ig-like C2-type 1">
    <location>
        <begin position="36"/>
        <end position="139"/>
    </location>
</feature>
<feature type="domain" description="Ig-like C2-type 2">
    <location>
        <begin position="140"/>
        <end position="220"/>
    </location>
</feature>
<feature type="domain" description="Ig-like C2-type 3">
    <location>
        <begin position="238"/>
        <end position="321"/>
    </location>
</feature>
<feature type="domain" description="Ig-like C2-type 4">
    <location>
        <begin position="329"/>
        <end position="416"/>
    </location>
</feature>
<feature type="domain" description="Fibronectin type-III 1" evidence="3">
    <location>
        <begin position="426"/>
        <end position="520"/>
    </location>
</feature>
<feature type="domain" description="Fibronectin type-III 2" evidence="3">
    <location>
        <begin position="523"/>
        <end position="618"/>
    </location>
</feature>
<feature type="region of interest" description="Disordered" evidence="4">
    <location>
        <begin position="722"/>
        <end position="743"/>
    </location>
</feature>
<feature type="region of interest" description="Disordered" evidence="4">
    <location>
        <begin position="762"/>
        <end position="814"/>
    </location>
</feature>
<feature type="compositionally biased region" description="Low complexity" evidence="4">
    <location>
        <begin position="770"/>
        <end position="781"/>
    </location>
</feature>
<feature type="glycosylation site" description="N-linked (GlcNAc...) asparagine" evidence="1">
    <location>
        <position position="93"/>
    </location>
</feature>
<feature type="glycosylation site" description="N-linked (GlcNAc...) asparagine" evidence="1">
    <location>
        <position position="246"/>
    </location>
</feature>
<feature type="glycosylation site" description="N-linked (GlcNAc...) asparagine" evidence="1">
    <location>
        <position position="381"/>
    </location>
</feature>
<feature type="glycosylation site" description="N-linked (GlcNAc...) asparagine" evidence="1">
    <location>
        <position position="382"/>
    </location>
</feature>
<feature type="glycosylation site" description="N-linked (GlcNAc...) asparagine" evidence="1">
    <location>
        <position position="580"/>
    </location>
</feature>
<feature type="glycosylation site" description="N-linked (GlcNAc...) asparagine" evidence="1">
    <location>
        <position position="604"/>
    </location>
</feature>
<feature type="glycosylation site" description="N-linked (GlcNAc...) asparagine" evidence="1">
    <location>
        <position position="634"/>
    </location>
</feature>
<feature type="disulfide bond" evidence="2">
    <location>
        <begin position="63"/>
        <end position="117"/>
    </location>
</feature>
<feature type="disulfide bond" evidence="2">
    <location>
        <begin position="160"/>
        <end position="209"/>
    </location>
</feature>
<feature type="disulfide bond" evidence="2">
    <location>
        <begin position="259"/>
        <end position="307"/>
    </location>
</feature>
<feature type="disulfide bond" evidence="2">
    <location>
        <begin position="351"/>
        <end position="400"/>
    </location>
</feature>
<feature type="sequence variant" id="VAR_060356" description="In dbSNP:rs12907128." evidence="5 6">
    <original>V</original>
    <variation>L</variation>
    <location>
        <position position="751"/>
    </location>
</feature>
<feature type="sequence conflict" description="In Ref. 3; AAD13399." evidence="7" ref="3">
    <original>N</original>
    <variation>S</variation>
    <location>
        <position position="598"/>
    </location>
</feature>
<feature type="sequence conflict" description="In Ref. 3; AAD13399." evidence="7" ref="3">
    <original>T</original>
    <variation>A</variation>
    <location>
        <position position="650"/>
    </location>
</feature>
<feature type="sequence conflict" description="In Ref. 3; AAD13399." evidence="7" ref="3">
    <original>F</original>
    <variation>L</variation>
    <location>
        <position position="654"/>
    </location>
</feature>
<feature type="sequence conflict" description="In Ref. 3; AAD13399." evidence="7" ref="3">
    <original>Q</original>
    <variation>R</variation>
    <location>
        <position position="729"/>
    </location>
</feature>
<sequence>MAVQRAASPRRPPAPLWPRLLLPLLLLLLPAPSEGLGHSAELAFAVEPSDDVAVPGQPIVLDCRVEGTPPVRITWRKNGVELPESTHSTLLANGSLMIRHFRLEPGGSPSDEGDYECVAQNRFGLVVSRKARIQAATMSDFHVHPQATVGEEGGVARFQCQIHGLPKPLITWEKNRVPIDTDNERYTLLPKGVLQITGLRAEDGGIFHCVASNIASIRISHGARLTVSGSGSGAYKEPAILVGPENLTLTVHQTAVLECVATGNPRPIVSWSRLDGRPIGVEGIQVLGTGNLIISDVTVQHSGVYVCAANRPGTRVRRTAQGRLVVQAPAEFVQHPQSISRPAGTTAMFTCQAQGEPPPHVTWLKNGQVLGPGGHVRLKNNNSTLTISGIGPEDEAIYQCVAENSAGSSQASARLTVLWAEGLPGPPRNVRAVSVSSTEVRVSWSEPLANTKEIIGYVLHIRKAADPPELEYQEAVSKSTFQHLVSDLEPSTAYSFYIKAYTPRGASSASVPTLASTLGEAPAPPPLSVRVLGSSSLQLLWEPWPRLAQHEGGFKLFYRPASKTSFTGPILLPGTVSSYNLSQLDPTAVYEVKLLAYNQHGDGNATVRFVSLRGASERTALSPPCDCRKEEAANQTSTTGIVIGIHIGVTCIIFCVLFLLFGQRGRVLLCKDVENQLSPPQGPRSQRDPGILALNGARRGQRGQLGRDEKRVDMKELEQLFPPASAAGQPDPRPTQDPAAPAPCEETQLSVLPLQGCGLMEGKTTEAKTTEATAPCAGLAAAPPPPDGGPGLLSEGQASRPAAARVTQPAHSEQ</sequence>
<keyword id="KW-1015">Disulfide bond</keyword>
<keyword id="KW-0325">Glycoprotein</keyword>
<keyword id="KW-0393">Immunoglobulin domain</keyword>
<keyword id="KW-0472">Membrane</keyword>
<keyword id="KW-1267">Proteomics identification</keyword>
<keyword id="KW-1185">Reference proteome</keyword>
<keyword id="KW-0677">Repeat</keyword>
<keyword id="KW-0732">Signal</keyword>
<keyword id="KW-0812">Transmembrane</keyword>
<keyword id="KW-1133">Transmembrane helix</keyword>
<gene>
    <name type="primary">IGDCC3</name>
    <name type="synonym">PUNC</name>
</gene>
<reference key="1">
    <citation type="journal article" date="2006" name="Nature">
        <title>Analysis of the DNA sequence and duplication history of human chromosome 15.</title>
        <authorList>
            <person name="Zody M.C."/>
            <person name="Garber M."/>
            <person name="Sharpe T."/>
            <person name="Young S.K."/>
            <person name="Rowen L."/>
            <person name="O'Neill K."/>
            <person name="Whittaker C.A."/>
            <person name="Kamal M."/>
            <person name="Chang J.L."/>
            <person name="Cuomo C.A."/>
            <person name="Dewar K."/>
            <person name="FitzGerald M.G."/>
            <person name="Kodira C.D."/>
            <person name="Madan A."/>
            <person name="Qin S."/>
            <person name="Yang X."/>
            <person name="Abbasi N."/>
            <person name="Abouelleil A."/>
            <person name="Arachchi H.M."/>
            <person name="Baradarani L."/>
            <person name="Birditt B."/>
            <person name="Bloom S."/>
            <person name="Bloom T."/>
            <person name="Borowsky M.L."/>
            <person name="Burke J."/>
            <person name="Butler J."/>
            <person name="Cook A."/>
            <person name="DeArellano K."/>
            <person name="DeCaprio D."/>
            <person name="Dorris L. III"/>
            <person name="Dors M."/>
            <person name="Eichler E.E."/>
            <person name="Engels R."/>
            <person name="Fahey J."/>
            <person name="Fleetwood P."/>
            <person name="Friedman C."/>
            <person name="Gearin G."/>
            <person name="Hall J.L."/>
            <person name="Hensley G."/>
            <person name="Johnson E."/>
            <person name="Jones C."/>
            <person name="Kamat A."/>
            <person name="Kaur A."/>
            <person name="Locke D.P."/>
            <person name="Madan A."/>
            <person name="Munson G."/>
            <person name="Jaffe D.B."/>
            <person name="Lui A."/>
            <person name="Macdonald P."/>
            <person name="Mauceli E."/>
            <person name="Naylor J.W."/>
            <person name="Nesbitt R."/>
            <person name="Nicol R."/>
            <person name="O'Leary S.B."/>
            <person name="Ratcliffe A."/>
            <person name="Rounsley S."/>
            <person name="She X."/>
            <person name="Sneddon K.M.B."/>
            <person name="Stewart S."/>
            <person name="Sougnez C."/>
            <person name="Stone S.M."/>
            <person name="Topham K."/>
            <person name="Vincent D."/>
            <person name="Wang S."/>
            <person name="Zimmer A.R."/>
            <person name="Birren B.W."/>
            <person name="Hood L."/>
            <person name="Lander E.S."/>
            <person name="Nusbaum C."/>
        </authorList>
    </citation>
    <scope>NUCLEOTIDE SEQUENCE [LARGE SCALE GENOMIC DNA]</scope>
</reference>
<reference key="2">
    <citation type="journal article" date="2004" name="Genome Res.">
        <title>The status, quality, and expansion of the NIH full-length cDNA project: the Mammalian Gene Collection (MGC).</title>
        <authorList>
            <consortium name="The MGC Project Team"/>
        </authorList>
    </citation>
    <scope>NUCLEOTIDE SEQUENCE [LARGE SCALE MRNA]</scope>
    <scope>VARIANT LEU-751</scope>
    <source>
        <tissue>Eye</tissue>
        <tissue>Ovary</tissue>
    </source>
</reference>
<reference key="3">
    <citation type="journal article" date="1999" name="Mamm. Genome">
        <title>Genomic structure and chromosomal localization of the mouse gene Punc.</title>
        <authorList>
            <person name="Salbaum J.M."/>
        </authorList>
    </citation>
    <scope>NUCLEOTIDE SEQUENCE [MRNA] OF 507-814</scope>
    <scope>VARIANT LEU-751</scope>
    <source>
        <tissue>Placenta</tissue>
    </source>
</reference>
<proteinExistence type="evidence at protein level"/>
<dbReference type="EMBL" id="AC105129">
    <property type="status" value="NOT_ANNOTATED_CDS"/>
    <property type="molecule type" value="Genomic_DNA"/>
</dbReference>
<dbReference type="EMBL" id="BC042054">
    <property type="protein sequence ID" value="AAH42054.1"/>
    <property type="molecule type" value="mRNA"/>
</dbReference>
<dbReference type="EMBL" id="BC067107">
    <property type="protein sequence ID" value="AAH67107.1"/>
    <property type="molecule type" value="mRNA"/>
</dbReference>
<dbReference type="EMBL" id="AF063936">
    <property type="protein sequence ID" value="AAD13399.1"/>
    <property type="molecule type" value="mRNA"/>
</dbReference>
<dbReference type="CCDS" id="CCDS10205.1"/>
<dbReference type="RefSeq" id="NP_004875.2">
    <property type="nucleotide sequence ID" value="NM_004884.4"/>
</dbReference>
<dbReference type="SMR" id="Q8IVU1"/>
<dbReference type="BioGRID" id="114918">
    <property type="interactions" value="2"/>
</dbReference>
<dbReference type="FunCoup" id="Q8IVU1">
    <property type="interactions" value="36"/>
</dbReference>
<dbReference type="IntAct" id="Q8IVU1">
    <property type="interactions" value="1"/>
</dbReference>
<dbReference type="STRING" id="9606.ENSP00000332773"/>
<dbReference type="GlyCosmos" id="Q8IVU1">
    <property type="glycosylation" value="7 sites, No reported glycans"/>
</dbReference>
<dbReference type="GlyGen" id="Q8IVU1">
    <property type="glycosylation" value="7 sites, 1 N-linked glycan (1 site)"/>
</dbReference>
<dbReference type="iPTMnet" id="Q8IVU1"/>
<dbReference type="PhosphoSitePlus" id="Q8IVU1"/>
<dbReference type="BioMuta" id="IGDCC3"/>
<dbReference type="DMDM" id="296434537"/>
<dbReference type="jPOST" id="Q8IVU1"/>
<dbReference type="MassIVE" id="Q8IVU1"/>
<dbReference type="PaxDb" id="9606-ENSP00000332773"/>
<dbReference type="PeptideAtlas" id="Q8IVU1"/>
<dbReference type="ProteomicsDB" id="70769"/>
<dbReference type="Antibodypedia" id="2652">
    <property type="antibodies" value="46 antibodies from 12 providers"/>
</dbReference>
<dbReference type="DNASU" id="9543"/>
<dbReference type="Ensembl" id="ENST00000327987.9">
    <property type="protein sequence ID" value="ENSP00000332773.4"/>
    <property type="gene ID" value="ENSG00000174498.14"/>
</dbReference>
<dbReference type="GeneID" id="9543"/>
<dbReference type="KEGG" id="hsa:9543"/>
<dbReference type="MANE-Select" id="ENST00000327987.9">
    <property type="protein sequence ID" value="ENSP00000332773.4"/>
    <property type="RefSeq nucleotide sequence ID" value="NM_004884.4"/>
    <property type="RefSeq protein sequence ID" value="NP_004875.2"/>
</dbReference>
<dbReference type="UCSC" id="uc002aos.2">
    <property type="organism name" value="human"/>
</dbReference>
<dbReference type="AGR" id="HGNC:9700"/>
<dbReference type="CTD" id="9543"/>
<dbReference type="DisGeNET" id="9543"/>
<dbReference type="GeneCards" id="IGDCC3"/>
<dbReference type="HGNC" id="HGNC:9700">
    <property type="gene designation" value="IGDCC3"/>
</dbReference>
<dbReference type="HPA" id="ENSG00000174498">
    <property type="expression patterns" value="Tissue enhanced (brain, parathyroid gland, placenta)"/>
</dbReference>
<dbReference type="MIM" id="604184">
    <property type="type" value="gene"/>
</dbReference>
<dbReference type="neXtProt" id="NX_Q8IVU1"/>
<dbReference type="OpenTargets" id="ENSG00000174498"/>
<dbReference type="PharmGKB" id="PA164720881"/>
<dbReference type="VEuPathDB" id="HostDB:ENSG00000174498"/>
<dbReference type="eggNOG" id="KOG4221">
    <property type="taxonomic scope" value="Eukaryota"/>
</dbReference>
<dbReference type="eggNOG" id="KOG4222">
    <property type="taxonomic scope" value="Eukaryota"/>
</dbReference>
<dbReference type="GeneTree" id="ENSGT00940000156969"/>
<dbReference type="HOGENOM" id="CLU_018612_2_0_1"/>
<dbReference type="InParanoid" id="Q8IVU1"/>
<dbReference type="OMA" id="CGLMEGK"/>
<dbReference type="OrthoDB" id="438268at2759"/>
<dbReference type="PAN-GO" id="Q8IVU1">
    <property type="GO annotations" value="1 GO annotation based on evolutionary models"/>
</dbReference>
<dbReference type="PhylomeDB" id="Q8IVU1"/>
<dbReference type="TreeFam" id="TF321506"/>
<dbReference type="PathwayCommons" id="Q8IVU1"/>
<dbReference type="SignaLink" id="Q8IVU1"/>
<dbReference type="BioGRID-ORCS" id="9543">
    <property type="hits" value="13 hits in 1153 CRISPR screens"/>
</dbReference>
<dbReference type="ChiTaRS" id="IGDCC3">
    <property type="organism name" value="human"/>
</dbReference>
<dbReference type="GenomeRNAi" id="9543"/>
<dbReference type="Pharos" id="Q8IVU1">
    <property type="development level" value="Tdark"/>
</dbReference>
<dbReference type="PRO" id="PR:Q8IVU1"/>
<dbReference type="Proteomes" id="UP000005640">
    <property type="component" value="Chromosome 15"/>
</dbReference>
<dbReference type="RNAct" id="Q8IVU1">
    <property type="molecule type" value="protein"/>
</dbReference>
<dbReference type="Bgee" id="ENSG00000174498">
    <property type="expression patterns" value="Expressed in oocyte and 126 other cell types or tissues"/>
</dbReference>
<dbReference type="ExpressionAtlas" id="Q8IVU1">
    <property type="expression patterns" value="baseline and differential"/>
</dbReference>
<dbReference type="GO" id="GO:0016020">
    <property type="term" value="C:membrane"/>
    <property type="evidence" value="ECO:0007669"/>
    <property type="project" value="UniProtKB-SubCell"/>
</dbReference>
<dbReference type="GO" id="GO:0098609">
    <property type="term" value="P:cell-cell adhesion"/>
    <property type="evidence" value="ECO:0000318"/>
    <property type="project" value="GO_Central"/>
</dbReference>
<dbReference type="GO" id="GO:0050885">
    <property type="term" value="P:neuromuscular process controlling balance"/>
    <property type="evidence" value="ECO:0007669"/>
    <property type="project" value="Ensembl"/>
</dbReference>
<dbReference type="CDD" id="cd00063">
    <property type="entry name" value="FN3"/>
    <property type="match status" value="2"/>
</dbReference>
<dbReference type="CDD" id="cd00096">
    <property type="entry name" value="Ig"/>
    <property type="match status" value="1"/>
</dbReference>
<dbReference type="FunFam" id="2.60.40.10:FF:001494">
    <property type="entry name" value="Immunoglobulin superfamily DCC subclass member 3"/>
    <property type="match status" value="1"/>
</dbReference>
<dbReference type="FunFam" id="2.60.40.10:FF:000577">
    <property type="entry name" value="immunoglobulin superfamily DCC subclass member 3"/>
    <property type="match status" value="1"/>
</dbReference>
<dbReference type="FunFam" id="2.60.40.10:FF:000930">
    <property type="entry name" value="immunoglobulin superfamily DCC subclass member 3"/>
    <property type="match status" value="1"/>
</dbReference>
<dbReference type="FunFam" id="2.60.40.10:FF:001881">
    <property type="entry name" value="immunoglobulin superfamily DCC subclass member 3"/>
    <property type="match status" value="1"/>
</dbReference>
<dbReference type="FunFam" id="2.60.40.10:FF:000189">
    <property type="entry name" value="Neogenin isoform 3"/>
    <property type="match status" value="1"/>
</dbReference>
<dbReference type="FunFam" id="2.60.40.10:FF:000299">
    <property type="entry name" value="protogenin isoform X2"/>
    <property type="match status" value="1"/>
</dbReference>
<dbReference type="Gene3D" id="2.60.40.10">
    <property type="entry name" value="Immunoglobulins"/>
    <property type="match status" value="6"/>
</dbReference>
<dbReference type="InterPro" id="IPR003961">
    <property type="entry name" value="FN3_dom"/>
</dbReference>
<dbReference type="InterPro" id="IPR036116">
    <property type="entry name" value="FN3_sf"/>
</dbReference>
<dbReference type="InterPro" id="IPR007110">
    <property type="entry name" value="Ig-like_dom"/>
</dbReference>
<dbReference type="InterPro" id="IPR036179">
    <property type="entry name" value="Ig-like_dom_sf"/>
</dbReference>
<dbReference type="InterPro" id="IPR013783">
    <property type="entry name" value="Ig-like_fold"/>
</dbReference>
<dbReference type="InterPro" id="IPR013098">
    <property type="entry name" value="Ig_I-set"/>
</dbReference>
<dbReference type="InterPro" id="IPR003599">
    <property type="entry name" value="Ig_sub"/>
</dbReference>
<dbReference type="InterPro" id="IPR003598">
    <property type="entry name" value="Ig_sub2"/>
</dbReference>
<dbReference type="PANTHER" id="PTHR44170:SF20">
    <property type="entry name" value="IMMUNOGLOBULIN SUPERFAMILY DCC SUBCLASS MEMBER 3"/>
    <property type="match status" value="1"/>
</dbReference>
<dbReference type="PANTHER" id="PTHR44170">
    <property type="entry name" value="PROTEIN SIDEKICK"/>
    <property type="match status" value="1"/>
</dbReference>
<dbReference type="Pfam" id="PF00041">
    <property type="entry name" value="fn3"/>
    <property type="match status" value="2"/>
</dbReference>
<dbReference type="Pfam" id="PF07679">
    <property type="entry name" value="I-set"/>
    <property type="match status" value="1"/>
</dbReference>
<dbReference type="Pfam" id="PF13927">
    <property type="entry name" value="Ig_3"/>
    <property type="match status" value="3"/>
</dbReference>
<dbReference type="SMART" id="SM00060">
    <property type="entry name" value="FN3"/>
    <property type="match status" value="2"/>
</dbReference>
<dbReference type="SMART" id="SM00409">
    <property type="entry name" value="IG"/>
    <property type="match status" value="4"/>
</dbReference>
<dbReference type="SMART" id="SM00408">
    <property type="entry name" value="IGc2"/>
    <property type="match status" value="4"/>
</dbReference>
<dbReference type="SUPFAM" id="SSF49265">
    <property type="entry name" value="Fibronectin type III"/>
    <property type="match status" value="1"/>
</dbReference>
<dbReference type="SUPFAM" id="SSF48726">
    <property type="entry name" value="Immunoglobulin"/>
    <property type="match status" value="4"/>
</dbReference>
<dbReference type="PROSITE" id="PS50853">
    <property type="entry name" value="FN3"/>
    <property type="match status" value="2"/>
</dbReference>
<dbReference type="PROSITE" id="PS50835">
    <property type="entry name" value="IG_LIKE"/>
    <property type="match status" value="4"/>
</dbReference>
<name>IGDC3_HUMAN</name>
<evidence type="ECO:0000255" key="1"/>
<evidence type="ECO:0000255" key="2">
    <source>
        <dbReference type="PROSITE-ProRule" id="PRU00114"/>
    </source>
</evidence>
<evidence type="ECO:0000255" key="3">
    <source>
        <dbReference type="PROSITE-ProRule" id="PRU00316"/>
    </source>
</evidence>
<evidence type="ECO:0000256" key="4">
    <source>
        <dbReference type="SAM" id="MobiDB-lite"/>
    </source>
</evidence>
<evidence type="ECO:0000269" key="5">
    <source>
    </source>
</evidence>
<evidence type="ECO:0000269" key="6">
    <source>
    </source>
</evidence>
<evidence type="ECO:0000305" key="7"/>
<organism>
    <name type="scientific">Homo sapiens</name>
    <name type="common">Human</name>
    <dbReference type="NCBI Taxonomy" id="9606"/>
    <lineage>
        <taxon>Eukaryota</taxon>
        <taxon>Metazoa</taxon>
        <taxon>Chordata</taxon>
        <taxon>Craniata</taxon>
        <taxon>Vertebrata</taxon>
        <taxon>Euteleostomi</taxon>
        <taxon>Mammalia</taxon>
        <taxon>Eutheria</taxon>
        <taxon>Euarchontoglires</taxon>
        <taxon>Primates</taxon>
        <taxon>Haplorrhini</taxon>
        <taxon>Catarrhini</taxon>
        <taxon>Hominidae</taxon>
        <taxon>Homo</taxon>
    </lineage>
</organism>